<sequence length="317" mass="35629">MIEVKHLKTLQALRNCGSLAAAAATLHQTQSALSHQFSDLEQRLGFRLFVRKSQPLRFTPQGEILLQLANQVLPQISQALQACNEPQQTRLRIAIECHSCIQWLTPALENFHKNWPQVEMDFKSGVTFDPQPALQQGELDLVMTSDILPRSGLHYSPMFDYEVRLVLAPDHPLAAKTRITPEDLASETLLIYPVQRSRLDVWRHFLQPAGVSPSLKSVDNTLLLIQMVAARMGIAALPHWVVESFERQGLVVTKTLGEGLWSRLYAAVRDGEQRQPVTEAFIRSARNHACDHLPFVKSAERPTYDAPTVRPGSPARL</sequence>
<comment type="function">
    <text>Control of the last step in methionine biosynthesis; MetR is a positive activator of the metA, metE and metH genes. MetR is also a negative regulator of its own expression. Binds homocysteine as an inducer.</text>
</comment>
<comment type="subcellular location">
    <subcellularLocation>
        <location>Cytoplasm</location>
    </subcellularLocation>
</comment>
<comment type="similarity">
    <text evidence="2">Belongs to the LysR transcriptional regulatory family.</text>
</comment>
<keyword id="KW-0002">3D-structure</keyword>
<keyword id="KW-0010">Activator</keyword>
<keyword id="KW-0028">Amino-acid biosynthesis</keyword>
<keyword id="KW-0963">Cytoplasm</keyword>
<keyword id="KW-0238">DNA-binding</keyword>
<keyword id="KW-0486">Methionine biosynthesis</keyword>
<keyword id="KW-1185">Reference proteome</keyword>
<keyword id="KW-0678">Repressor</keyword>
<keyword id="KW-0804">Transcription</keyword>
<keyword id="KW-0805">Transcription regulation</keyword>
<proteinExistence type="evidence at protein level"/>
<evidence type="ECO:0000255" key="1">
    <source>
        <dbReference type="PROSITE-ProRule" id="PRU00253"/>
    </source>
</evidence>
<evidence type="ECO:0000305" key="2"/>
<evidence type="ECO:0007829" key="3">
    <source>
        <dbReference type="PDB" id="5FO5"/>
    </source>
</evidence>
<protein>
    <recommendedName>
        <fullName>HTH-type transcriptional regulator MetR</fullName>
    </recommendedName>
</protein>
<feature type="chain" id="PRO_0000105673" description="HTH-type transcriptional regulator MetR">
    <location>
        <begin position="1"/>
        <end position="317"/>
    </location>
</feature>
<feature type="domain" description="HTH lysR-type" evidence="1">
    <location>
        <begin position="1"/>
        <end position="59"/>
    </location>
</feature>
<feature type="DNA-binding region" description="H-T-H motif" evidence="1">
    <location>
        <begin position="19"/>
        <end position="38"/>
    </location>
</feature>
<feature type="sequence conflict" description="In Ref. 5." evidence="2" ref="5">
    <original>L</original>
    <variation>T</variation>
    <location>
        <position position="19"/>
    </location>
</feature>
<feature type="helix" evidence="3">
    <location>
        <begin position="4"/>
        <end position="16"/>
    </location>
</feature>
<feature type="helix" evidence="3">
    <location>
        <begin position="19"/>
        <end position="25"/>
    </location>
</feature>
<feature type="helix" evidence="3">
    <location>
        <begin position="30"/>
        <end position="44"/>
    </location>
</feature>
<feature type="helix" evidence="3">
    <location>
        <begin position="60"/>
        <end position="83"/>
    </location>
</feature>
<organism>
    <name type="scientific">Escherichia coli (strain K12)</name>
    <dbReference type="NCBI Taxonomy" id="83333"/>
    <lineage>
        <taxon>Bacteria</taxon>
        <taxon>Pseudomonadati</taxon>
        <taxon>Pseudomonadota</taxon>
        <taxon>Gammaproteobacteria</taxon>
        <taxon>Enterobacterales</taxon>
        <taxon>Enterobacteriaceae</taxon>
        <taxon>Escherichia</taxon>
    </lineage>
</organism>
<reference key="1">
    <citation type="journal article" date="1990" name="Proc. Natl. Acad. Sci. U.S.A.">
        <title>Structure-function studies on Escherichia coli MetR protein, a putative prokaryotic leucine zipper protein.</title>
        <authorList>
            <person name="Maxon M.E."/>
            <person name="Wigboldus J."/>
            <person name="Brot N."/>
            <person name="Weissbach H."/>
        </authorList>
    </citation>
    <scope>NUCLEOTIDE SEQUENCE [GENOMIC DNA]</scope>
    <source>
        <strain>K12</strain>
    </source>
</reference>
<reference key="2">
    <citation type="journal article" date="1992" name="Science">
        <title>Analysis of the Escherichia coli genome: DNA sequence of the region from 84.5 to 86.5 minutes.</title>
        <authorList>
            <person name="Daniels D.L."/>
            <person name="Plunkett G. III"/>
            <person name="Burland V.D."/>
            <person name="Blattner F.R."/>
        </authorList>
    </citation>
    <scope>NUCLEOTIDE SEQUENCE [LARGE SCALE GENOMIC DNA]</scope>
    <source>
        <strain>K12 / MG1655 / ATCC 47076</strain>
    </source>
</reference>
<reference key="3">
    <citation type="journal article" date="1997" name="Science">
        <title>The complete genome sequence of Escherichia coli K-12.</title>
        <authorList>
            <person name="Blattner F.R."/>
            <person name="Plunkett G. III"/>
            <person name="Bloch C.A."/>
            <person name="Perna N.T."/>
            <person name="Burland V."/>
            <person name="Riley M."/>
            <person name="Collado-Vides J."/>
            <person name="Glasner J.D."/>
            <person name="Rode C.K."/>
            <person name="Mayhew G.F."/>
            <person name="Gregor J."/>
            <person name="Davis N.W."/>
            <person name="Kirkpatrick H.A."/>
            <person name="Goeden M.A."/>
            <person name="Rose D.J."/>
            <person name="Mau B."/>
            <person name="Shao Y."/>
        </authorList>
    </citation>
    <scope>NUCLEOTIDE SEQUENCE [LARGE SCALE GENOMIC DNA]</scope>
    <source>
        <strain>K12 / MG1655 / ATCC 47076</strain>
    </source>
</reference>
<reference key="4">
    <citation type="journal article" date="2006" name="Mol. Syst. Biol.">
        <title>Highly accurate genome sequences of Escherichia coli K-12 strains MG1655 and W3110.</title>
        <authorList>
            <person name="Hayashi K."/>
            <person name="Morooka N."/>
            <person name="Yamamoto Y."/>
            <person name="Fujita K."/>
            <person name="Isono K."/>
            <person name="Choi S."/>
            <person name="Ohtsubo E."/>
            <person name="Baba T."/>
            <person name="Wanner B.L."/>
            <person name="Mori H."/>
            <person name="Horiuchi T."/>
        </authorList>
    </citation>
    <scope>NUCLEOTIDE SEQUENCE [LARGE SCALE GENOMIC DNA]</scope>
    <source>
        <strain>K12 / W3110 / ATCC 27325 / DSM 5911</strain>
    </source>
</reference>
<reference key="5">
    <citation type="journal article" date="1989" name="Proc. Natl. Acad. Sci. U.S.A.">
        <title>Regulation of methionine synthesis in Escherichia coli: effect of the MetR protein on the expression of the metE and metR genes.</title>
        <authorList>
            <person name="Maxon M.E."/>
            <person name="Redfield B."/>
            <person name="Cai X.-Y."/>
            <person name="Shoeman R."/>
            <person name="Fujita K."/>
            <person name="Fisher W."/>
            <person name="Stauffer G."/>
            <person name="Weissbach H."/>
            <person name="Brot N."/>
        </authorList>
    </citation>
    <scope>NUCLEOTIDE SEQUENCE [GENOMIC DNA] OF 1-19</scope>
</reference>
<name>METR_ECOLI</name>
<dbReference type="EMBL" id="M37630">
    <property type="protein sequence ID" value="AAA62781.1"/>
    <property type="molecule type" value="Genomic_DNA"/>
</dbReference>
<dbReference type="EMBL" id="M87049">
    <property type="protein sequence ID" value="AAA67624.1"/>
    <property type="molecule type" value="Genomic_DNA"/>
</dbReference>
<dbReference type="EMBL" id="U00096">
    <property type="protein sequence ID" value="AAC76831.1"/>
    <property type="molecule type" value="Genomic_DNA"/>
</dbReference>
<dbReference type="EMBL" id="AP009048">
    <property type="protein sequence ID" value="BAE77473.1"/>
    <property type="molecule type" value="Genomic_DNA"/>
</dbReference>
<dbReference type="EMBL" id="J04155">
    <property type="protein sequence ID" value="AAA24159.2"/>
    <property type="status" value="ALT_SEQ"/>
    <property type="molecule type" value="Genomic_DNA"/>
</dbReference>
<dbReference type="PIR" id="A36066">
    <property type="entry name" value="A36066"/>
</dbReference>
<dbReference type="RefSeq" id="NP_418272.1">
    <property type="nucleotide sequence ID" value="NC_000913.3"/>
</dbReference>
<dbReference type="RefSeq" id="WP_000573621.1">
    <property type="nucleotide sequence ID" value="NZ_SSZK01000046.1"/>
</dbReference>
<dbReference type="PDB" id="5FO5">
    <property type="method" value="X-ray"/>
    <property type="resolution" value="2.16 A"/>
    <property type="chains" value="A=1-92"/>
</dbReference>
<dbReference type="PDBsum" id="5FO5"/>
<dbReference type="SMR" id="P0A9F9"/>
<dbReference type="BioGRID" id="4259476">
    <property type="interactions" value="73"/>
</dbReference>
<dbReference type="BioGRID" id="852608">
    <property type="interactions" value="2"/>
</dbReference>
<dbReference type="DIP" id="DIP-10198N"/>
<dbReference type="FunCoup" id="P0A9F9">
    <property type="interactions" value="87"/>
</dbReference>
<dbReference type="IntAct" id="P0A9F9">
    <property type="interactions" value="8"/>
</dbReference>
<dbReference type="STRING" id="511145.b3828"/>
<dbReference type="PaxDb" id="511145-b3828"/>
<dbReference type="EnsemblBacteria" id="AAC76831">
    <property type="protein sequence ID" value="AAC76831"/>
    <property type="gene ID" value="b3828"/>
</dbReference>
<dbReference type="GeneID" id="948310"/>
<dbReference type="KEGG" id="ecj:JW3804"/>
<dbReference type="KEGG" id="eco:b3828"/>
<dbReference type="KEGG" id="ecoc:C3026_20715"/>
<dbReference type="PATRIC" id="fig|1411691.4.peg.2880"/>
<dbReference type="EchoBASE" id="EB0586"/>
<dbReference type="eggNOG" id="COG0583">
    <property type="taxonomic scope" value="Bacteria"/>
</dbReference>
<dbReference type="HOGENOM" id="CLU_039613_6_0_6"/>
<dbReference type="InParanoid" id="P0A9F9"/>
<dbReference type="OMA" id="PGNPCHD"/>
<dbReference type="OrthoDB" id="155872at2"/>
<dbReference type="PhylomeDB" id="P0A9F9"/>
<dbReference type="BioCyc" id="EcoCyc:PD03938"/>
<dbReference type="PRO" id="PR:P0A9F9"/>
<dbReference type="Proteomes" id="UP000000625">
    <property type="component" value="Chromosome"/>
</dbReference>
<dbReference type="GO" id="GO:0005737">
    <property type="term" value="C:cytoplasm"/>
    <property type="evidence" value="ECO:0007669"/>
    <property type="project" value="UniProtKB-SubCell"/>
</dbReference>
<dbReference type="GO" id="GO:0016597">
    <property type="term" value="F:amino acid binding"/>
    <property type="evidence" value="ECO:0000314"/>
    <property type="project" value="EcoCyc"/>
</dbReference>
<dbReference type="GO" id="GO:0003677">
    <property type="term" value="F:DNA binding"/>
    <property type="evidence" value="ECO:0000314"/>
    <property type="project" value="EcoCyc"/>
</dbReference>
<dbReference type="GO" id="GO:0003700">
    <property type="term" value="F:DNA-binding transcription factor activity"/>
    <property type="evidence" value="ECO:0007669"/>
    <property type="project" value="InterPro"/>
</dbReference>
<dbReference type="GO" id="GO:0000976">
    <property type="term" value="F:transcription cis-regulatory region binding"/>
    <property type="evidence" value="ECO:0000318"/>
    <property type="project" value="GO_Central"/>
</dbReference>
<dbReference type="GO" id="GO:0009086">
    <property type="term" value="P:methionine biosynthetic process"/>
    <property type="evidence" value="ECO:0007669"/>
    <property type="project" value="UniProtKB-KW"/>
</dbReference>
<dbReference type="GO" id="GO:0006355">
    <property type="term" value="P:regulation of DNA-templated transcription"/>
    <property type="evidence" value="ECO:0000315"/>
    <property type="project" value="EcoCyc"/>
</dbReference>
<dbReference type="CDD" id="cd08441">
    <property type="entry name" value="PBP2_MetR"/>
    <property type="match status" value="1"/>
</dbReference>
<dbReference type="FunFam" id="1.10.10.10:FF:000247">
    <property type="entry name" value="HTH-type transcriptional regulator MetR"/>
    <property type="match status" value="1"/>
</dbReference>
<dbReference type="FunFam" id="3.40.190.10:FF:000083">
    <property type="entry name" value="HTH-type transcriptional regulator MetR"/>
    <property type="match status" value="1"/>
</dbReference>
<dbReference type="Gene3D" id="3.40.190.10">
    <property type="entry name" value="Periplasmic binding protein-like II"/>
    <property type="match status" value="2"/>
</dbReference>
<dbReference type="Gene3D" id="1.10.10.10">
    <property type="entry name" value="Winged helix-like DNA-binding domain superfamily/Winged helix DNA-binding domain"/>
    <property type="match status" value="1"/>
</dbReference>
<dbReference type="InterPro" id="IPR005119">
    <property type="entry name" value="LysR_subst-bd"/>
</dbReference>
<dbReference type="InterPro" id="IPR037406">
    <property type="entry name" value="MetR_PBP2"/>
</dbReference>
<dbReference type="InterPro" id="IPR000847">
    <property type="entry name" value="Tscrpt_reg_HTH_LysR"/>
</dbReference>
<dbReference type="InterPro" id="IPR036388">
    <property type="entry name" value="WH-like_DNA-bd_sf"/>
</dbReference>
<dbReference type="InterPro" id="IPR036390">
    <property type="entry name" value="WH_DNA-bd_sf"/>
</dbReference>
<dbReference type="NCBIfam" id="NF011950">
    <property type="entry name" value="PRK15421.1"/>
    <property type="match status" value="1"/>
</dbReference>
<dbReference type="PANTHER" id="PTHR30126">
    <property type="entry name" value="HTH-TYPE TRANSCRIPTIONAL REGULATOR"/>
    <property type="match status" value="1"/>
</dbReference>
<dbReference type="PANTHER" id="PTHR30126:SF25">
    <property type="entry name" value="HTH-TYPE TRANSCRIPTIONAL REGULATOR METR"/>
    <property type="match status" value="1"/>
</dbReference>
<dbReference type="Pfam" id="PF00126">
    <property type="entry name" value="HTH_1"/>
    <property type="match status" value="1"/>
</dbReference>
<dbReference type="Pfam" id="PF03466">
    <property type="entry name" value="LysR_substrate"/>
    <property type="match status" value="1"/>
</dbReference>
<dbReference type="PRINTS" id="PR00039">
    <property type="entry name" value="HTHLYSR"/>
</dbReference>
<dbReference type="SUPFAM" id="SSF53850">
    <property type="entry name" value="Periplasmic binding protein-like II"/>
    <property type="match status" value="1"/>
</dbReference>
<dbReference type="SUPFAM" id="SSF46785">
    <property type="entry name" value="Winged helix' DNA-binding domain"/>
    <property type="match status" value="1"/>
</dbReference>
<dbReference type="PROSITE" id="PS50931">
    <property type="entry name" value="HTH_LYSR"/>
    <property type="match status" value="1"/>
</dbReference>
<accession>P0A9F9</accession>
<accession>P19797</accession>
<accession>Q2M8D3</accession>
<gene>
    <name type="primary">metR</name>
    <name type="ordered locus">b3828</name>
    <name type="ordered locus">JW3804</name>
</gene>